<comment type="function">
    <text evidence="1">Catalyzes the N-acylation of UDP-3-O-acylglucosamine using 3-hydroxyacyl-ACP as the acyl donor. Is involved in the biosynthesis of lipid A, a phosphorylated glycolipid that anchors the lipopolysaccharide to the outer membrane of the cell.</text>
</comment>
<comment type="catalytic activity">
    <reaction evidence="1">
        <text>a UDP-3-O-[(3R)-3-hydroxyacyl]-alpha-D-glucosamine + a (3R)-hydroxyacyl-[ACP] = a UDP-2-N,3-O-bis[(3R)-3-hydroxyacyl]-alpha-D-glucosamine + holo-[ACP] + H(+)</text>
        <dbReference type="Rhea" id="RHEA:53836"/>
        <dbReference type="Rhea" id="RHEA-COMP:9685"/>
        <dbReference type="Rhea" id="RHEA-COMP:9945"/>
        <dbReference type="ChEBI" id="CHEBI:15378"/>
        <dbReference type="ChEBI" id="CHEBI:64479"/>
        <dbReference type="ChEBI" id="CHEBI:78827"/>
        <dbReference type="ChEBI" id="CHEBI:137740"/>
        <dbReference type="ChEBI" id="CHEBI:137748"/>
        <dbReference type="EC" id="2.3.1.191"/>
    </reaction>
</comment>
<comment type="pathway">
    <text evidence="1">Bacterial outer membrane biogenesis; LPS lipid A biosynthesis.</text>
</comment>
<comment type="subunit">
    <text evidence="1">Homotrimer.</text>
</comment>
<comment type="similarity">
    <text evidence="1">Belongs to the transferase hexapeptide repeat family. LpxD subfamily.</text>
</comment>
<accession>Q87EI2</accession>
<protein>
    <recommendedName>
        <fullName evidence="1">UDP-3-O-acylglucosamine N-acyltransferase</fullName>
        <ecNumber evidence="1">2.3.1.191</ecNumber>
    </recommendedName>
</protein>
<sequence>MPIFTAQELAERFNLQLFGDGNIRIHGVATLTQASPEQLSFLANPRYLTQLPNSRAGVIVLHADDVKAASGAVLIAKDPYVTFAKIATLFDIKPAREAGIHPLATVDPSAHVSPTAHVGAFVSIGARSSIGASCIIGTGSIIGDDCTIDDGSELIARVTLISRVRLGKRVRIHPGAVLGGEGFGLAMESGHWIKIPQLGGVVIGDDCEIGANSCIDRGALDDTVLEEDVHIDNLVQIAHNCRIGAHTAIAGCTGIAGSAKIGRYCLLGGHVGVVGHLQICDNVVITGKSVVRNSIHTPGEYSSGTPLTDNRTWRKNAVRFKQLDMLVRRMMAVSKEKA</sequence>
<evidence type="ECO:0000255" key="1">
    <source>
        <dbReference type="HAMAP-Rule" id="MF_00523"/>
    </source>
</evidence>
<name>LPXD_XYLFT</name>
<feature type="chain" id="PRO_0000059715" description="UDP-3-O-acylglucosamine N-acyltransferase">
    <location>
        <begin position="1"/>
        <end position="338"/>
    </location>
</feature>
<feature type="active site" description="Proton acceptor" evidence="1">
    <location>
        <position position="239"/>
    </location>
</feature>
<gene>
    <name evidence="1" type="primary">lpxD</name>
    <name type="ordered locus">PD_0325</name>
</gene>
<reference key="1">
    <citation type="journal article" date="2003" name="J. Bacteriol.">
        <title>Comparative analyses of the complete genome sequences of Pierce's disease and citrus variegated chlorosis strains of Xylella fastidiosa.</title>
        <authorList>
            <person name="Van Sluys M.A."/>
            <person name="de Oliveira M.C."/>
            <person name="Monteiro-Vitorello C.B."/>
            <person name="Miyaki C.Y."/>
            <person name="Furlan L.R."/>
            <person name="Camargo L.E.A."/>
            <person name="da Silva A.C.R."/>
            <person name="Moon D.H."/>
            <person name="Takita M.A."/>
            <person name="Lemos E.G.M."/>
            <person name="Machado M.A."/>
            <person name="Ferro M.I.T."/>
            <person name="da Silva F.R."/>
            <person name="Goldman M.H.S."/>
            <person name="Goldman G.H."/>
            <person name="Lemos M.V.F."/>
            <person name="El-Dorry H."/>
            <person name="Tsai S.M."/>
            <person name="Carrer H."/>
            <person name="Carraro D.M."/>
            <person name="de Oliveira R.C."/>
            <person name="Nunes L.R."/>
            <person name="Siqueira W.J."/>
            <person name="Coutinho L.L."/>
            <person name="Kimura E.T."/>
            <person name="Ferro E.S."/>
            <person name="Harakava R."/>
            <person name="Kuramae E.E."/>
            <person name="Marino C.L."/>
            <person name="Giglioti E."/>
            <person name="Abreu I.L."/>
            <person name="Alves L.M.C."/>
            <person name="do Amaral A.M."/>
            <person name="Baia G.S."/>
            <person name="Blanco S.R."/>
            <person name="Brito M.S."/>
            <person name="Cannavan F.S."/>
            <person name="Celestino A.V."/>
            <person name="da Cunha A.F."/>
            <person name="Fenille R.C."/>
            <person name="Ferro J.A."/>
            <person name="Formighieri E.F."/>
            <person name="Kishi L.T."/>
            <person name="Leoni S.G."/>
            <person name="Oliveira A.R."/>
            <person name="Rosa V.E. Jr."/>
            <person name="Sassaki F.T."/>
            <person name="Sena J.A.D."/>
            <person name="de Souza A.A."/>
            <person name="Truffi D."/>
            <person name="Tsukumo F."/>
            <person name="Yanai G.M."/>
            <person name="Zaros L.G."/>
            <person name="Civerolo E.L."/>
            <person name="Simpson A.J.G."/>
            <person name="Almeida N.F. Jr."/>
            <person name="Setubal J.C."/>
            <person name="Kitajima J.P."/>
        </authorList>
    </citation>
    <scope>NUCLEOTIDE SEQUENCE [LARGE SCALE GENOMIC DNA]</scope>
    <source>
        <strain>Temecula1 / ATCC 700964</strain>
    </source>
</reference>
<proteinExistence type="inferred from homology"/>
<dbReference type="EC" id="2.3.1.191" evidence="1"/>
<dbReference type="EMBL" id="AE009442">
    <property type="protein sequence ID" value="AAO28209.1"/>
    <property type="molecule type" value="Genomic_DNA"/>
</dbReference>
<dbReference type="RefSeq" id="WP_004089333.1">
    <property type="nucleotide sequence ID" value="NC_004556.1"/>
</dbReference>
<dbReference type="SMR" id="Q87EI2"/>
<dbReference type="GeneID" id="93904026"/>
<dbReference type="KEGG" id="xft:PD_0325"/>
<dbReference type="HOGENOM" id="CLU_049865_0_1_6"/>
<dbReference type="UniPathway" id="UPA00973"/>
<dbReference type="Proteomes" id="UP000002516">
    <property type="component" value="Chromosome"/>
</dbReference>
<dbReference type="GO" id="GO:0016020">
    <property type="term" value="C:membrane"/>
    <property type="evidence" value="ECO:0007669"/>
    <property type="project" value="GOC"/>
</dbReference>
<dbReference type="GO" id="GO:0016410">
    <property type="term" value="F:N-acyltransferase activity"/>
    <property type="evidence" value="ECO:0007669"/>
    <property type="project" value="InterPro"/>
</dbReference>
<dbReference type="GO" id="GO:0009245">
    <property type="term" value="P:lipid A biosynthetic process"/>
    <property type="evidence" value="ECO:0007669"/>
    <property type="project" value="UniProtKB-UniRule"/>
</dbReference>
<dbReference type="CDD" id="cd03352">
    <property type="entry name" value="LbH_LpxD"/>
    <property type="match status" value="1"/>
</dbReference>
<dbReference type="Gene3D" id="1.20.5.170">
    <property type="match status" value="1"/>
</dbReference>
<dbReference type="Gene3D" id="2.160.10.10">
    <property type="entry name" value="Hexapeptide repeat proteins"/>
    <property type="match status" value="1"/>
</dbReference>
<dbReference type="Gene3D" id="3.40.1390.10">
    <property type="entry name" value="MurE/MurF, N-terminal domain"/>
    <property type="match status" value="1"/>
</dbReference>
<dbReference type="HAMAP" id="MF_00523">
    <property type="entry name" value="LpxD"/>
    <property type="match status" value="1"/>
</dbReference>
<dbReference type="InterPro" id="IPR001451">
    <property type="entry name" value="Hexapep"/>
</dbReference>
<dbReference type="InterPro" id="IPR007691">
    <property type="entry name" value="LpxD"/>
</dbReference>
<dbReference type="InterPro" id="IPR011004">
    <property type="entry name" value="Trimer_LpxA-like_sf"/>
</dbReference>
<dbReference type="InterPro" id="IPR020573">
    <property type="entry name" value="UDP_GlcNAc_AcTrfase_non-rep"/>
</dbReference>
<dbReference type="NCBIfam" id="TIGR01853">
    <property type="entry name" value="lipid_A_lpxD"/>
    <property type="match status" value="1"/>
</dbReference>
<dbReference type="NCBIfam" id="NF002060">
    <property type="entry name" value="PRK00892.1"/>
    <property type="match status" value="1"/>
</dbReference>
<dbReference type="PANTHER" id="PTHR43378">
    <property type="entry name" value="UDP-3-O-ACYLGLUCOSAMINE N-ACYLTRANSFERASE"/>
    <property type="match status" value="1"/>
</dbReference>
<dbReference type="PANTHER" id="PTHR43378:SF2">
    <property type="entry name" value="UDP-3-O-ACYLGLUCOSAMINE N-ACYLTRANSFERASE 1, MITOCHONDRIAL-RELATED"/>
    <property type="match status" value="1"/>
</dbReference>
<dbReference type="Pfam" id="PF00132">
    <property type="entry name" value="Hexapep"/>
    <property type="match status" value="1"/>
</dbReference>
<dbReference type="Pfam" id="PF14602">
    <property type="entry name" value="Hexapep_2"/>
    <property type="match status" value="2"/>
</dbReference>
<dbReference type="Pfam" id="PF04613">
    <property type="entry name" value="LpxD"/>
    <property type="match status" value="1"/>
</dbReference>
<dbReference type="SUPFAM" id="SSF51161">
    <property type="entry name" value="Trimeric LpxA-like enzymes"/>
    <property type="match status" value="1"/>
</dbReference>
<organism>
    <name type="scientific">Xylella fastidiosa (strain Temecula1 / ATCC 700964)</name>
    <dbReference type="NCBI Taxonomy" id="183190"/>
    <lineage>
        <taxon>Bacteria</taxon>
        <taxon>Pseudomonadati</taxon>
        <taxon>Pseudomonadota</taxon>
        <taxon>Gammaproteobacteria</taxon>
        <taxon>Lysobacterales</taxon>
        <taxon>Lysobacteraceae</taxon>
        <taxon>Xylella</taxon>
    </lineage>
</organism>
<keyword id="KW-0012">Acyltransferase</keyword>
<keyword id="KW-0441">Lipid A biosynthesis</keyword>
<keyword id="KW-0444">Lipid biosynthesis</keyword>
<keyword id="KW-0443">Lipid metabolism</keyword>
<keyword id="KW-1185">Reference proteome</keyword>
<keyword id="KW-0677">Repeat</keyword>
<keyword id="KW-0808">Transferase</keyword>